<reference key="1">
    <citation type="journal article" date="2007" name="Curr. Biol.">
        <title>Reduced genome of the thioautotrophic intracellular symbiont in a deep-sea clam, Calyptogena okutanii.</title>
        <authorList>
            <person name="Kuwahara H."/>
            <person name="Yoshida T."/>
            <person name="Takaki Y."/>
            <person name="Shimamura S."/>
            <person name="Nishi S."/>
            <person name="Harada M."/>
            <person name="Matsuyama K."/>
            <person name="Takishita K."/>
            <person name="Kawato M."/>
            <person name="Uematsu K."/>
            <person name="Fujiwara Y."/>
            <person name="Sato T."/>
            <person name="Kato C."/>
            <person name="Kitagawa M."/>
            <person name="Kato I."/>
            <person name="Maruyama T."/>
        </authorList>
    </citation>
    <scope>NUCLEOTIDE SEQUENCE [LARGE SCALE GENOMIC DNA]</scope>
    <source>
        <strain>HA</strain>
    </source>
</reference>
<comment type="function">
    <text evidence="1">Binds the 23S rRNA.</text>
</comment>
<comment type="cofactor">
    <cofactor evidence="1">
        <name>Zn(2+)</name>
        <dbReference type="ChEBI" id="CHEBI:29105"/>
    </cofactor>
    <text evidence="1">Binds 1 zinc ion per subunit.</text>
</comment>
<comment type="subunit">
    <text evidence="1">Part of the 50S ribosomal subunit.</text>
</comment>
<comment type="similarity">
    <text evidence="1">Belongs to the bacterial ribosomal protein bL31 family. Type A subfamily.</text>
</comment>
<protein>
    <recommendedName>
        <fullName evidence="1">Large ribosomal subunit protein bL31</fullName>
    </recommendedName>
    <alternativeName>
        <fullName evidence="2">50S ribosomal protein L31</fullName>
    </alternativeName>
</protein>
<organism>
    <name type="scientific">Vesicomyosocius okutanii subsp. Calyptogena okutanii (strain HA)</name>
    <dbReference type="NCBI Taxonomy" id="412965"/>
    <lineage>
        <taxon>Bacteria</taxon>
        <taxon>Pseudomonadati</taxon>
        <taxon>Pseudomonadota</taxon>
        <taxon>Gammaproteobacteria</taxon>
        <taxon>Candidatus Pseudothioglobaceae</taxon>
        <taxon>Candidatus Vesicomyosocius</taxon>
    </lineage>
</organism>
<feature type="chain" id="PRO_1000126763" description="Large ribosomal subunit protein bL31">
    <location>
        <begin position="1"/>
        <end position="70"/>
    </location>
</feature>
<feature type="binding site" evidence="1">
    <location>
        <position position="16"/>
    </location>
    <ligand>
        <name>Zn(2+)</name>
        <dbReference type="ChEBI" id="CHEBI:29105"/>
    </ligand>
</feature>
<feature type="binding site" evidence="1">
    <location>
        <position position="18"/>
    </location>
    <ligand>
        <name>Zn(2+)</name>
        <dbReference type="ChEBI" id="CHEBI:29105"/>
    </ligand>
</feature>
<feature type="binding site" evidence="1">
    <location>
        <position position="38"/>
    </location>
    <ligand>
        <name>Zn(2+)</name>
        <dbReference type="ChEBI" id="CHEBI:29105"/>
    </ligand>
</feature>
<feature type="binding site" evidence="1">
    <location>
        <position position="41"/>
    </location>
    <ligand>
        <name>Zn(2+)</name>
        <dbReference type="ChEBI" id="CHEBI:29105"/>
    </ligand>
</feature>
<keyword id="KW-0479">Metal-binding</keyword>
<keyword id="KW-1185">Reference proteome</keyword>
<keyword id="KW-0687">Ribonucleoprotein</keyword>
<keyword id="KW-0689">Ribosomal protein</keyword>
<keyword id="KW-0694">RNA-binding</keyword>
<keyword id="KW-0699">rRNA-binding</keyword>
<keyword id="KW-0862">Zinc</keyword>
<sequence>MKTSIHPNYNDVQIICSCGNTFKTRSTIDKKELHLDVCSSCHPFYTGKQKIMDSAGRVEKFKSRYASFKR</sequence>
<evidence type="ECO:0000255" key="1">
    <source>
        <dbReference type="HAMAP-Rule" id="MF_00501"/>
    </source>
</evidence>
<evidence type="ECO:0000305" key="2"/>
<name>RL31_VESOH</name>
<accession>A5CVK6</accession>
<dbReference type="EMBL" id="AP009247">
    <property type="protein sequence ID" value="BAF62028.1"/>
    <property type="molecule type" value="Genomic_DNA"/>
</dbReference>
<dbReference type="RefSeq" id="WP_011930297.1">
    <property type="nucleotide sequence ID" value="NC_009465.1"/>
</dbReference>
<dbReference type="SMR" id="A5CVK6"/>
<dbReference type="STRING" id="412965.COSY_0929"/>
<dbReference type="KEGG" id="vok:COSY_0929"/>
<dbReference type="eggNOG" id="COG0254">
    <property type="taxonomic scope" value="Bacteria"/>
</dbReference>
<dbReference type="HOGENOM" id="CLU_114306_4_0_6"/>
<dbReference type="OrthoDB" id="9803251at2"/>
<dbReference type="Proteomes" id="UP000000247">
    <property type="component" value="Chromosome"/>
</dbReference>
<dbReference type="GO" id="GO:1990904">
    <property type="term" value="C:ribonucleoprotein complex"/>
    <property type="evidence" value="ECO:0007669"/>
    <property type="project" value="UniProtKB-KW"/>
</dbReference>
<dbReference type="GO" id="GO:0005840">
    <property type="term" value="C:ribosome"/>
    <property type="evidence" value="ECO:0007669"/>
    <property type="project" value="UniProtKB-KW"/>
</dbReference>
<dbReference type="GO" id="GO:0046872">
    <property type="term" value="F:metal ion binding"/>
    <property type="evidence" value="ECO:0007669"/>
    <property type="project" value="UniProtKB-KW"/>
</dbReference>
<dbReference type="GO" id="GO:0019843">
    <property type="term" value="F:rRNA binding"/>
    <property type="evidence" value="ECO:0007669"/>
    <property type="project" value="UniProtKB-KW"/>
</dbReference>
<dbReference type="GO" id="GO:0003735">
    <property type="term" value="F:structural constituent of ribosome"/>
    <property type="evidence" value="ECO:0007669"/>
    <property type="project" value="InterPro"/>
</dbReference>
<dbReference type="GO" id="GO:0006412">
    <property type="term" value="P:translation"/>
    <property type="evidence" value="ECO:0007669"/>
    <property type="project" value="UniProtKB-UniRule"/>
</dbReference>
<dbReference type="Gene3D" id="4.10.830.30">
    <property type="entry name" value="Ribosomal protein L31"/>
    <property type="match status" value="1"/>
</dbReference>
<dbReference type="HAMAP" id="MF_00501">
    <property type="entry name" value="Ribosomal_bL31_1"/>
    <property type="match status" value="1"/>
</dbReference>
<dbReference type="InterPro" id="IPR034704">
    <property type="entry name" value="Ribosomal_bL28/bL31-like_sf"/>
</dbReference>
<dbReference type="InterPro" id="IPR002150">
    <property type="entry name" value="Ribosomal_bL31"/>
</dbReference>
<dbReference type="InterPro" id="IPR027491">
    <property type="entry name" value="Ribosomal_bL31_A"/>
</dbReference>
<dbReference type="InterPro" id="IPR042105">
    <property type="entry name" value="Ribosomal_bL31_sf"/>
</dbReference>
<dbReference type="NCBIfam" id="TIGR00105">
    <property type="entry name" value="L31"/>
    <property type="match status" value="1"/>
</dbReference>
<dbReference type="NCBIfam" id="NF000612">
    <property type="entry name" value="PRK00019.1"/>
    <property type="match status" value="1"/>
</dbReference>
<dbReference type="NCBIfam" id="NF001809">
    <property type="entry name" value="PRK00528.1"/>
    <property type="match status" value="1"/>
</dbReference>
<dbReference type="PANTHER" id="PTHR33280">
    <property type="entry name" value="50S RIBOSOMAL PROTEIN L31, CHLOROPLASTIC"/>
    <property type="match status" value="1"/>
</dbReference>
<dbReference type="PANTHER" id="PTHR33280:SF6">
    <property type="entry name" value="LARGE RIBOSOMAL SUBUNIT PROTEIN BL31A"/>
    <property type="match status" value="1"/>
</dbReference>
<dbReference type="Pfam" id="PF01197">
    <property type="entry name" value="Ribosomal_L31"/>
    <property type="match status" value="1"/>
</dbReference>
<dbReference type="PRINTS" id="PR01249">
    <property type="entry name" value="RIBOSOMALL31"/>
</dbReference>
<dbReference type="SUPFAM" id="SSF143800">
    <property type="entry name" value="L28p-like"/>
    <property type="match status" value="1"/>
</dbReference>
<dbReference type="PROSITE" id="PS01143">
    <property type="entry name" value="RIBOSOMAL_L31"/>
    <property type="match status" value="1"/>
</dbReference>
<gene>
    <name evidence="1" type="primary">rpmE</name>
    <name type="ordered locus">COSY_0929</name>
</gene>
<proteinExistence type="inferred from homology"/>